<name>ARC_CORGB</name>
<protein>
    <recommendedName>
        <fullName evidence="1">AAA ATPase forming ring-shaped complexes</fullName>
        <shortName evidence="1">ARC</shortName>
    </recommendedName>
</protein>
<keyword id="KW-0067">ATP-binding</keyword>
<keyword id="KW-0175">Coiled coil</keyword>
<keyword id="KW-0547">Nucleotide-binding</keyword>
<sequence>MVTMSSPTDSSPSNSFSDFNREEQSRLSDEVRQLKRTNSDLGARNAKLAEMLKSSRDKLSVLFSQLEDMAQPPSVYGTFLETAKDGSNAEIFAGGRRMRVAVSPMLCAADLMPGVQVRLGEGNQVLEACDFEQTGELATLMEMIGRDRALVSDRSGEERVVKLAGPLMDRTAKLPRPGDTLLVDRKAGYAFEAIAKTEISRLALEEAPDVSYQDIGGLDDQIELIQDAVELPFLHPEMYRAYNLHPPKGVLLYGPPGCGKTLIAKAVANSLANRIGETGTSYFINVKGPELLNKYVGETERQIRVIFERARELAGDGRPVIIFFDEMESIFRTRGSGVSSDMETTVVPQLLAELDGVEDLSNVIVVGATNREELIDPAILRPGRLDIKIRINRPNKQGAHDIFTRYINDSIPLAEPAEDLIDRAVDHLYTPRPYVRLTLIDGSVETLNYHDFVSGAMIANIVDRAKKSAIKAHIDGTGVGLTAEQLIQAIDDENQQSEDLPNTSNPDEWSRITGRQGKQVTHAEVVI</sequence>
<proteinExistence type="inferred from homology"/>
<gene>
    <name evidence="1" type="primary">arc</name>
    <name type="ordered locus">cgR_1557</name>
</gene>
<comment type="subunit">
    <text evidence="1">Homohexamer. Assembles into a hexameric ring structure.</text>
</comment>
<comment type="similarity">
    <text evidence="1">Belongs to the AAA ATPase family.</text>
</comment>
<feature type="chain" id="PRO_0000396978" description="AAA ATPase forming ring-shaped complexes">
    <location>
        <begin position="1"/>
        <end position="527"/>
    </location>
</feature>
<feature type="region of interest" description="Disordered" evidence="2">
    <location>
        <begin position="1"/>
        <end position="38"/>
    </location>
</feature>
<feature type="region of interest" description="Disordered" evidence="2">
    <location>
        <begin position="492"/>
        <end position="515"/>
    </location>
</feature>
<feature type="coiled-coil region" evidence="1">
    <location>
        <begin position="21"/>
        <end position="53"/>
    </location>
</feature>
<feature type="compositionally biased region" description="Low complexity" evidence="2">
    <location>
        <begin position="1"/>
        <end position="18"/>
    </location>
</feature>
<feature type="compositionally biased region" description="Basic and acidic residues" evidence="2">
    <location>
        <begin position="19"/>
        <end position="33"/>
    </location>
</feature>
<feature type="compositionally biased region" description="Polar residues" evidence="2">
    <location>
        <begin position="497"/>
        <end position="507"/>
    </location>
</feature>
<feature type="binding site" evidence="1">
    <location>
        <begin position="257"/>
        <end position="262"/>
    </location>
    <ligand>
        <name>ATP</name>
        <dbReference type="ChEBI" id="CHEBI:30616"/>
    </ligand>
</feature>
<organism>
    <name type="scientific">Corynebacterium glutamicum (strain R)</name>
    <dbReference type="NCBI Taxonomy" id="340322"/>
    <lineage>
        <taxon>Bacteria</taxon>
        <taxon>Bacillati</taxon>
        <taxon>Actinomycetota</taxon>
        <taxon>Actinomycetes</taxon>
        <taxon>Mycobacteriales</taxon>
        <taxon>Corynebacteriaceae</taxon>
        <taxon>Corynebacterium</taxon>
    </lineage>
</organism>
<dbReference type="EMBL" id="AP009044">
    <property type="protein sequence ID" value="BAF54549.1"/>
    <property type="molecule type" value="Genomic_DNA"/>
</dbReference>
<dbReference type="RefSeq" id="WP_011265753.1">
    <property type="nucleotide sequence ID" value="NC_009342.1"/>
</dbReference>
<dbReference type="SMR" id="A4QE83"/>
<dbReference type="GeneID" id="1019470"/>
<dbReference type="KEGG" id="cgt:cgR_1557"/>
<dbReference type="HOGENOM" id="CLU_036054_0_0_11"/>
<dbReference type="PhylomeDB" id="A4QE83"/>
<dbReference type="Proteomes" id="UP000006698">
    <property type="component" value="Chromosome"/>
</dbReference>
<dbReference type="GO" id="GO:0000502">
    <property type="term" value="C:proteasome complex"/>
    <property type="evidence" value="ECO:0007669"/>
    <property type="project" value="InterPro"/>
</dbReference>
<dbReference type="GO" id="GO:0005524">
    <property type="term" value="F:ATP binding"/>
    <property type="evidence" value="ECO:0007669"/>
    <property type="project" value="UniProtKB-UniRule"/>
</dbReference>
<dbReference type="GO" id="GO:0016887">
    <property type="term" value="F:ATP hydrolysis activity"/>
    <property type="evidence" value="ECO:0007669"/>
    <property type="project" value="UniProtKB-UniRule"/>
</dbReference>
<dbReference type="GO" id="GO:0019941">
    <property type="term" value="P:modification-dependent protein catabolic process"/>
    <property type="evidence" value="ECO:0007669"/>
    <property type="project" value="InterPro"/>
</dbReference>
<dbReference type="GO" id="GO:0010498">
    <property type="term" value="P:proteasomal protein catabolic process"/>
    <property type="evidence" value="ECO:0007669"/>
    <property type="project" value="InterPro"/>
</dbReference>
<dbReference type="FunFam" id="3.40.50.300:FF:001025">
    <property type="entry name" value="ATPase family, AAA domain-containing 2B"/>
    <property type="match status" value="1"/>
</dbReference>
<dbReference type="Gene3D" id="1.10.8.60">
    <property type="match status" value="1"/>
</dbReference>
<dbReference type="Gene3D" id="1.20.5.170">
    <property type="match status" value="1"/>
</dbReference>
<dbReference type="Gene3D" id="2.40.50.140">
    <property type="entry name" value="Nucleic acid-binding proteins"/>
    <property type="match status" value="2"/>
</dbReference>
<dbReference type="Gene3D" id="3.40.50.300">
    <property type="entry name" value="P-loop containing nucleotide triphosphate hydrolases"/>
    <property type="match status" value="1"/>
</dbReference>
<dbReference type="HAMAP" id="MF_02112">
    <property type="entry name" value="ARC_ATPase"/>
    <property type="match status" value="1"/>
</dbReference>
<dbReference type="InterPro" id="IPR003593">
    <property type="entry name" value="AAA+_ATPase"/>
</dbReference>
<dbReference type="InterPro" id="IPR050168">
    <property type="entry name" value="AAA_ATPase_domain"/>
</dbReference>
<dbReference type="InterPro" id="IPR003959">
    <property type="entry name" value="ATPase_AAA_core"/>
</dbReference>
<dbReference type="InterPro" id="IPR003960">
    <property type="entry name" value="ATPase_AAA_CS"/>
</dbReference>
<dbReference type="InterPro" id="IPR012340">
    <property type="entry name" value="NA-bd_OB-fold"/>
</dbReference>
<dbReference type="InterPro" id="IPR027417">
    <property type="entry name" value="P-loop_NTPase"/>
</dbReference>
<dbReference type="InterPro" id="IPR032501">
    <property type="entry name" value="Prot_ATP_ID_OB_2nd"/>
</dbReference>
<dbReference type="InterPro" id="IPR041626">
    <property type="entry name" value="Prot_ATP_ID_OB_N"/>
</dbReference>
<dbReference type="InterPro" id="IPR022482">
    <property type="entry name" value="Proteasome_ATPase"/>
</dbReference>
<dbReference type="NCBIfam" id="TIGR03689">
    <property type="entry name" value="pup_AAA"/>
    <property type="match status" value="1"/>
</dbReference>
<dbReference type="PANTHER" id="PTHR23077">
    <property type="entry name" value="AAA-FAMILY ATPASE"/>
    <property type="match status" value="1"/>
</dbReference>
<dbReference type="PANTHER" id="PTHR23077:SF144">
    <property type="entry name" value="PROTEASOME-ASSOCIATED ATPASE"/>
    <property type="match status" value="1"/>
</dbReference>
<dbReference type="Pfam" id="PF00004">
    <property type="entry name" value="AAA"/>
    <property type="match status" value="1"/>
</dbReference>
<dbReference type="Pfam" id="PF16450">
    <property type="entry name" value="Prot_ATP_ID_OB_C"/>
    <property type="match status" value="1"/>
</dbReference>
<dbReference type="Pfam" id="PF17758">
    <property type="entry name" value="Prot_ATP_ID_OB_N"/>
    <property type="match status" value="1"/>
</dbReference>
<dbReference type="SMART" id="SM00382">
    <property type="entry name" value="AAA"/>
    <property type="match status" value="1"/>
</dbReference>
<dbReference type="SUPFAM" id="SSF52540">
    <property type="entry name" value="P-loop containing nucleoside triphosphate hydrolases"/>
    <property type="match status" value="1"/>
</dbReference>
<dbReference type="PROSITE" id="PS00674">
    <property type="entry name" value="AAA"/>
    <property type="match status" value="1"/>
</dbReference>
<reference key="1">
    <citation type="journal article" date="2007" name="Microbiology">
        <title>Comparative analysis of the Corynebacterium glutamicum group and complete genome sequence of strain R.</title>
        <authorList>
            <person name="Yukawa H."/>
            <person name="Omumasaba C.A."/>
            <person name="Nonaka H."/>
            <person name="Kos P."/>
            <person name="Okai N."/>
            <person name="Suzuki N."/>
            <person name="Suda M."/>
            <person name="Tsuge Y."/>
            <person name="Watanabe J."/>
            <person name="Ikeda Y."/>
            <person name="Vertes A.A."/>
            <person name="Inui M."/>
        </authorList>
    </citation>
    <scope>NUCLEOTIDE SEQUENCE [LARGE SCALE GENOMIC DNA]</scope>
    <source>
        <strain>R</strain>
    </source>
</reference>
<evidence type="ECO:0000255" key="1">
    <source>
        <dbReference type="HAMAP-Rule" id="MF_02112"/>
    </source>
</evidence>
<evidence type="ECO:0000256" key="2">
    <source>
        <dbReference type="SAM" id="MobiDB-lite"/>
    </source>
</evidence>
<accession>A4QE83</accession>